<evidence type="ECO:0000255" key="1">
    <source>
        <dbReference type="PROSITE-ProRule" id="PRU00210"/>
    </source>
</evidence>
<evidence type="ECO:0000256" key="2">
    <source>
        <dbReference type="SAM" id="MobiDB-lite"/>
    </source>
</evidence>
<evidence type="ECO:0000269" key="3">
    <source>
    </source>
</evidence>
<evidence type="ECO:0000269" key="4">
    <source>
    </source>
</evidence>
<evidence type="ECO:0000269" key="5">
    <source>
    </source>
</evidence>
<evidence type="ECO:0000269" key="6">
    <source>
    </source>
</evidence>
<evidence type="ECO:0000269" key="7">
    <source>
    </source>
</evidence>
<evidence type="ECO:0000269" key="8">
    <source>
    </source>
</evidence>
<evidence type="ECO:0000269" key="9">
    <source>
    </source>
</evidence>
<evidence type="ECO:0000269" key="10">
    <source>
    </source>
</evidence>
<evidence type="ECO:0000269" key="11">
    <source>
    </source>
</evidence>
<evidence type="ECO:0000269" key="12">
    <source>
    </source>
</evidence>
<evidence type="ECO:0000269" key="13">
    <source>
    </source>
</evidence>
<evidence type="ECO:0000269" key="14">
    <source>
    </source>
</evidence>
<evidence type="ECO:0000269" key="15">
    <source>
    </source>
</evidence>
<evidence type="ECO:0000269" key="16">
    <source>
    </source>
</evidence>
<evidence type="ECO:0000269" key="17">
    <source>
    </source>
</evidence>
<evidence type="ECO:0000269" key="18">
    <source ref="5"/>
</evidence>
<evidence type="ECO:0000303" key="19">
    <source>
    </source>
</evidence>
<evidence type="ECO:0000312" key="20">
    <source>
        <dbReference type="HGNC" id="HGNC:8864"/>
    </source>
</evidence>
<evidence type="ECO:0007744" key="21">
    <source>
        <dbReference type="PDB" id="6RUR"/>
    </source>
</evidence>
<evidence type="ECO:0007744" key="22">
    <source>
        <dbReference type="PDB" id="6RUS"/>
    </source>
</evidence>
<evidence type="ECO:0007829" key="23">
    <source>
        <dbReference type="PDB" id="6RUS"/>
    </source>
</evidence>
<evidence type="ECO:0007829" key="24">
    <source>
        <dbReference type="PDB" id="6S0A"/>
    </source>
</evidence>
<evidence type="ECO:0007829" key="25">
    <source>
        <dbReference type="PDB" id="6S0B"/>
    </source>
</evidence>
<evidence type="ECO:0007829" key="26">
    <source>
        <dbReference type="PDB" id="8Q6R"/>
    </source>
</evidence>
<feature type="signal peptide">
    <location>
        <begin position="1"/>
        <end position="27"/>
    </location>
</feature>
<feature type="chain" id="PRO_0000035863" description="Properdin">
    <location>
        <begin position="28"/>
        <end position="469"/>
    </location>
</feature>
<feature type="domain" description="TSP type-1 0" evidence="1">
    <location>
        <begin position="28"/>
        <end position="76"/>
    </location>
</feature>
<feature type="domain" description="TSP type-1 1" evidence="1">
    <location>
        <begin position="77"/>
        <end position="134"/>
    </location>
</feature>
<feature type="domain" description="TSP type-1 2" evidence="1">
    <location>
        <begin position="136"/>
        <end position="191"/>
    </location>
</feature>
<feature type="domain" description="TSP type-1 3" evidence="1">
    <location>
        <begin position="193"/>
        <end position="255"/>
    </location>
</feature>
<feature type="domain" description="TSP type-1 4" evidence="1">
    <location>
        <begin position="257"/>
        <end position="313"/>
    </location>
</feature>
<feature type="domain" description="TSP type-1 5" evidence="1">
    <location>
        <begin position="315"/>
        <end position="377"/>
    </location>
</feature>
<feature type="domain" description="TSP type-1 6" evidence="1">
    <location>
        <begin position="379"/>
        <end position="462"/>
    </location>
</feature>
<feature type="region of interest" description="Disordered" evidence="2">
    <location>
        <begin position="219"/>
        <end position="238"/>
    </location>
</feature>
<feature type="region of interest" description="Interaction with Complement C3 beta chain" evidence="12 13">
    <location>
        <begin position="351"/>
        <end position="359"/>
    </location>
</feature>
<feature type="glycosylation site" description="C-linked (Man) tryptophan" evidence="3 13">
    <location>
        <position position="83"/>
    </location>
</feature>
<feature type="glycosylation site" description="C-linked (Man) tryptophan" evidence="3 13">
    <location>
        <position position="86"/>
    </location>
</feature>
<feature type="glycosylation site" description="O-linked (Fuc...) threonine" evidence="5 13">
    <location>
        <position position="92"/>
    </location>
</feature>
<feature type="glycosylation site" description="C-linked (Man) tryptophan" evidence="3 13">
    <location>
        <position position="139"/>
    </location>
</feature>
<feature type="glycosylation site" description="C-linked (Man) tryptophan" evidence="3 13">
    <location>
        <position position="142"/>
    </location>
</feature>
<feature type="glycosylation site" description="C-linked (Man) tryptophan" evidence="3 13">
    <location>
        <position position="145"/>
    </location>
</feature>
<feature type="glycosylation site" description="O-linked (Fuc...) threonine" evidence="5 13">
    <location>
        <position position="151"/>
    </location>
</feature>
<feature type="glycosylation site" description="C-linked (Man) tryptophan" evidence="3 13">
    <location>
        <position position="196"/>
    </location>
</feature>
<feature type="glycosylation site" description="C-linked (Man) tryptophan" evidence="3 13">
    <location>
        <position position="199"/>
    </location>
</feature>
<feature type="glycosylation site" description="C-linked (Man) tryptophan" evidence="13">
    <location>
        <position position="202"/>
    </location>
</feature>
<feature type="glycosylation site" description="O-linked (Fuc...) serine" evidence="5 13">
    <location>
        <position position="208"/>
    </location>
</feature>
<feature type="glycosylation site" description="C-linked (Man) tryptophan" evidence="3 13">
    <location>
        <position position="260"/>
    </location>
</feature>
<feature type="glycosylation site" description="C-linked (Man) tryptophan" evidence="3 13">
    <location>
        <position position="263"/>
    </location>
</feature>
<feature type="glycosylation site" description="O-linked (Fuc...) threonine" evidence="5 13">
    <location>
        <position position="272"/>
    </location>
</feature>
<feature type="glycosylation site" description="C-linked (Man) tryptophan" evidence="3 13">
    <location>
        <position position="321"/>
    </location>
</feature>
<feature type="glycosylation site" description="C-linked (Man) tryptophan" evidence="3 13">
    <location>
        <position position="324"/>
    </location>
</feature>
<feature type="glycosylation site" description="C-linked (Man) tryptophan" evidence="3 13">
    <location>
        <position position="382"/>
    </location>
</feature>
<feature type="glycosylation site" description="C-linked (Man) tryptophan" evidence="3 13">
    <location>
        <position position="385"/>
    </location>
</feature>
<feature type="glycosylation site" description="C-linked (Man) tryptophan" evidence="3 13">
    <location>
        <position position="388"/>
    </location>
</feature>
<feature type="glycosylation site" description="N-linked (GlcNAc...) (complex) asparagine" evidence="8 10">
    <location>
        <position position="428"/>
    </location>
</feature>
<feature type="disulfide bond" evidence="1 13">
    <location>
        <begin position="32"/>
        <end position="56"/>
    </location>
</feature>
<feature type="disulfide bond" evidence="1 13">
    <location>
        <begin position="43"/>
        <end position="72"/>
    </location>
</feature>
<feature type="disulfide bond" evidence="13">
    <location>
        <begin position="57"/>
        <end position="75"/>
    </location>
</feature>
<feature type="disulfide bond" evidence="1 13">
    <location>
        <begin position="89"/>
        <end position="127"/>
    </location>
</feature>
<feature type="disulfide bond" evidence="1 13">
    <location>
        <begin position="93"/>
        <end position="133"/>
    </location>
</feature>
<feature type="disulfide bond" evidence="1 13">
    <location>
        <begin position="104"/>
        <end position="111"/>
    </location>
</feature>
<feature type="disulfide bond" evidence="13">
    <location>
        <begin position="132"/>
        <end position="170"/>
    </location>
</feature>
<feature type="disulfide bond" evidence="1 13">
    <location>
        <begin position="148"/>
        <end position="184"/>
    </location>
</feature>
<feature type="disulfide bond" evidence="1 13">
    <location>
        <begin position="152"/>
        <end position="190"/>
    </location>
</feature>
<feature type="disulfide bond" evidence="1 13">
    <location>
        <begin position="163"/>
        <end position="174"/>
    </location>
</feature>
<feature type="disulfide bond" evidence="1 13">
    <location>
        <begin position="205"/>
        <end position="248"/>
    </location>
</feature>
<feature type="disulfide bond" evidence="1 13">
    <location>
        <begin position="209"/>
        <end position="254"/>
    </location>
</feature>
<feature type="disulfide bond" evidence="1 13">
    <location>
        <begin position="224"/>
        <end position="238"/>
    </location>
</feature>
<feature type="disulfide bond" evidence="1 13">
    <location>
        <begin position="269"/>
        <end position="306"/>
    </location>
</feature>
<feature type="disulfide bond" evidence="1 13">
    <location>
        <begin position="273"/>
        <end position="312"/>
    </location>
</feature>
<feature type="disulfide bond" evidence="1 13">
    <location>
        <begin position="284"/>
        <end position="296"/>
    </location>
</feature>
<feature type="disulfide bond" evidence="1 13">
    <location>
        <begin position="327"/>
        <end position="370"/>
    </location>
</feature>
<feature type="disulfide bond" evidence="1 13">
    <location>
        <begin position="337"/>
        <end position="376"/>
    </location>
</feature>
<feature type="disulfide bond" evidence="1 13">
    <location>
        <begin position="350"/>
        <end position="360"/>
    </location>
</feature>
<feature type="disulfide bond" evidence="1 13">
    <location>
        <begin position="391"/>
        <end position="455"/>
    </location>
</feature>
<feature type="disulfide bond" evidence="1 13">
    <location>
        <begin position="395"/>
        <end position="461"/>
    </location>
</feature>
<feature type="disulfide bond" evidence="1 13">
    <location>
        <begin position="407"/>
        <end position="439"/>
    </location>
</feature>
<feature type="sequence variant" id="VAR_035813" description="In a breast cancer sample; somatic mutation." evidence="9">
    <original>T</original>
    <variation>I</variation>
    <location>
        <position position="3"/>
    </location>
</feature>
<feature type="sequence variant" id="VAR_083038" description="In PFD; type II; inhibits secretion and oligomerization." evidence="13">
    <original>C</original>
    <variation>Y</variation>
    <location>
        <position position="32"/>
    </location>
</feature>
<feature type="sequence variant" id="VAR_020395" description="In dbSNP:rs8177068." evidence="18">
    <original>V</original>
    <variation>M</variation>
    <location>
        <position position="53"/>
    </location>
</feature>
<feature type="sequence variant" id="VAR_002002" description="In PFD; type II; dbSNP:rs132630259." evidence="14">
    <original>R</original>
    <variation>W</variation>
    <location>
        <position position="100"/>
    </location>
</feature>
<feature type="sequence variant" id="VAR_020396" description="In dbSNP:rs8177076." evidence="18">
    <original>P</original>
    <variation>L</variation>
    <location>
        <position position="204"/>
    </location>
</feature>
<feature type="sequence variant" id="VAR_083039" description="In PFD; type II; decreases expression, inhibits oligomerization and fails to stimulate bacteriolysis; does not affect binding to Complement C3 beta chain." evidence="12">
    <original>E</original>
    <variation>K</variation>
    <location>
        <position position="244"/>
    </location>
</feature>
<feature type="sequence variant" id="VAR_020397" description="In dbSNP:rs8177077." evidence="18">
    <original>G</original>
    <variation>S</variation>
    <location>
        <position position="250"/>
    </location>
</feature>
<feature type="sequence variant" id="VAR_013139" description="In PFD; type I; dbSNP:rs28935480." evidence="4">
    <original>G</original>
    <variation>V</variation>
    <location>
        <position position="298"/>
    </location>
</feature>
<feature type="sequence variant" id="VAR_002003" description="In PFD; type II; significantly decreases Complement C3 beta chain binding." evidence="13 16">
    <original>Q</original>
    <variation>R</variation>
    <location>
        <position position="343"/>
    </location>
</feature>
<feature type="sequence variant" id="VAR_002004" description="In PFD; type III; significantly decreases Complement C3 beta chain binding; dbSNP:rs132630261." evidence="13 15">
    <original>Y</original>
    <variation>D</variation>
    <location>
        <position position="414"/>
    </location>
</feature>
<feature type="mutagenesis site" description="Inhibits oligomerization; when associated with A-58 and A-275." evidence="13">
    <original>L</original>
    <variation>A</variation>
    <location>
        <position position="47"/>
    </location>
</feature>
<feature type="mutagenesis site" description="Inhibits oligomerization; when associated with A-47 and A-275." evidence="13">
    <original>L</original>
    <variation>A</variation>
    <location>
        <position position="58"/>
    </location>
</feature>
<feature type="mutagenesis site" description="Inhibits oligomerization." evidence="13">
    <original>E</original>
    <variation>R</variation>
    <location>
        <position position="244"/>
    </location>
</feature>
<feature type="mutagenesis site" description="Inhibits oligomerization; when associated with A-47 and A-58." evidence="13">
    <original>L</original>
    <variation>A</variation>
    <location>
        <position position="275"/>
    </location>
</feature>
<feature type="mutagenesis site" description="Significantly decreases Complement C3 beta chain binding." evidence="13">
    <original>R</original>
    <variation>A</variation>
    <location>
        <position position="329"/>
    </location>
</feature>
<feature type="mutagenesis site" description="Slightly decreases Complement C3 beta chain binding." evidence="13">
    <original>R</original>
    <variation>A</variation>
    <location>
        <position position="330"/>
    </location>
</feature>
<feature type="mutagenesis site" description="Decreases Complement C3 beta chain binding." evidence="13">
    <original>R</original>
    <variation>A</variation>
    <location>
        <position position="351"/>
    </location>
</feature>
<feature type="mutagenesis site" description="Significantly decreases Complement C3 beta chain binding." evidence="13">
    <original>R</original>
    <variation>A</variation>
    <location>
        <position position="353"/>
    </location>
</feature>
<feature type="mutagenesis site" description="Significantly decreases Complement C3 beta chain binding." evidence="13">
    <original>R</original>
    <variation>A</variation>
    <location>
        <position position="359"/>
    </location>
</feature>
<feature type="mutagenesis site" description="Decreases Complement C3 beta chain binding." evidence="13">
    <original>QQ</original>
    <variation>AA</variation>
    <location>
        <begin position="364"/>
        <end position="365"/>
    </location>
</feature>
<feature type="mutagenesis site" description="Inhibits oligomerization; when associated with A-47 and A-58." evidence="13">
    <original>L</original>
    <variation>V</variation>
    <location>
        <position position="456"/>
    </location>
</feature>
<feature type="strand" evidence="26">
    <location>
        <begin position="30"/>
        <end position="36"/>
    </location>
</feature>
<feature type="strand" evidence="26">
    <location>
        <begin position="38"/>
        <end position="40"/>
    </location>
</feature>
<feature type="strand" evidence="26">
    <location>
        <begin position="43"/>
        <end position="51"/>
    </location>
</feature>
<feature type="helix" evidence="26">
    <location>
        <begin position="53"/>
        <end position="56"/>
    </location>
</feature>
<feature type="strand" evidence="26">
    <location>
        <begin position="63"/>
        <end position="67"/>
    </location>
</feature>
<feature type="strand" evidence="26">
    <location>
        <begin position="72"/>
        <end position="76"/>
    </location>
</feature>
<feature type="strand" evidence="26">
    <location>
        <begin position="90"/>
        <end position="105"/>
    </location>
</feature>
<feature type="strand" evidence="26">
    <location>
        <begin position="107"/>
        <end position="109"/>
    </location>
</feature>
<feature type="turn" evidence="26">
    <location>
        <begin position="112"/>
        <end position="114"/>
    </location>
</feature>
<feature type="strand" evidence="26">
    <location>
        <begin position="120"/>
        <end position="127"/>
    </location>
</feature>
<feature type="strand" evidence="26">
    <location>
        <begin position="129"/>
        <end position="132"/>
    </location>
</feature>
<feature type="strand" evidence="24">
    <location>
        <begin position="150"/>
        <end position="153"/>
    </location>
</feature>
<feature type="strand" evidence="24">
    <location>
        <begin position="169"/>
        <end position="171"/>
    </location>
</feature>
<feature type="strand" evidence="24">
    <location>
        <begin position="178"/>
        <end position="180"/>
    </location>
</feature>
<feature type="strand" evidence="23">
    <location>
        <begin position="208"/>
        <end position="214"/>
    </location>
</feature>
<feature type="strand" evidence="23">
    <location>
        <begin position="217"/>
        <end position="221"/>
    </location>
</feature>
<feature type="strand" evidence="23">
    <location>
        <begin position="229"/>
        <end position="233"/>
    </location>
</feature>
<feature type="strand" evidence="23">
    <location>
        <begin position="242"/>
        <end position="247"/>
    </location>
</feature>
<feature type="strand" evidence="26">
    <location>
        <begin position="264"/>
        <end position="267"/>
    </location>
</feature>
<feature type="strand" evidence="26">
    <location>
        <begin position="272"/>
        <end position="281"/>
    </location>
</feature>
<feature type="strand" evidence="26">
    <location>
        <begin position="300"/>
        <end position="307"/>
    </location>
</feature>
<feature type="strand" evidence="26">
    <location>
        <begin position="342"/>
        <end position="347"/>
    </location>
</feature>
<feature type="strand" evidence="23">
    <location>
        <begin position="354"/>
        <end position="356"/>
    </location>
</feature>
<feature type="strand" evidence="26">
    <location>
        <begin position="364"/>
        <end position="372"/>
    </location>
</feature>
<feature type="strand" evidence="26">
    <location>
        <begin position="377"/>
        <end position="382"/>
    </location>
</feature>
<feature type="strand" evidence="26">
    <location>
        <begin position="392"/>
        <end position="398"/>
    </location>
</feature>
<feature type="strand" evidence="26">
    <location>
        <begin position="400"/>
        <end position="409"/>
    </location>
</feature>
<feature type="strand" evidence="26">
    <location>
        <begin position="416"/>
        <end position="418"/>
    </location>
</feature>
<feature type="strand" evidence="26">
    <location>
        <begin position="421"/>
        <end position="424"/>
    </location>
</feature>
<feature type="strand" evidence="26">
    <location>
        <begin position="427"/>
        <end position="433"/>
    </location>
</feature>
<feature type="strand" evidence="26">
    <location>
        <begin position="436"/>
        <end position="438"/>
    </location>
</feature>
<feature type="strand" evidence="23">
    <location>
        <begin position="442"/>
        <end position="444"/>
    </location>
</feature>
<feature type="strand" evidence="26">
    <location>
        <begin position="445"/>
        <end position="454"/>
    </location>
</feature>
<feature type="turn" evidence="25">
    <location>
        <begin position="464"/>
        <end position="466"/>
    </location>
</feature>
<dbReference type="EMBL" id="X57748">
    <property type="protein sequence ID" value="CAA40914.1"/>
    <property type="molecule type" value="mRNA"/>
</dbReference>
<dbReference type="EMBL" id="X70872">
    <property type="protein sequence ID" value="CAA50220.1"/>
    <property type="molecule type" value="Genomic_DNA"/>
</dbReference>
<dbReference type="EMBL" id="M83652">
    <property type="protein sequence ID" value="AAA36489.1"/>
    <property type="molecule type" value="mRNA"/>
</dbReference>
<dbReference type="EMBL" id="AF005664">
    <property type="protein sequence ID" value="AAB63279.1"/>
    <property type="molecule type" value="Genomic_DNA"/>
</dbReference>
<dbReference type="EMBL" id="AF005665">
    <property type="protein sequence ID" value="AAB63280.1"/>
    <property type="molecule type" value="Genomic_DNA"/>
</dbReference>
<dbReference type="EMBL" id="AF005666">
    <property type="protein sequence ID" value="AAC51626.1"/>
    <property type="molecule type" value="Genomic_DNA"/>
</dbReference>
<dbReference type="EMBL" id="AF005668">
    <property type="protein sequence ID" value="AAB62886.1"/>
    <property type="molecule type" value="Genomic_DNA"/>
</dbReference>
<dbReference type="EMBL" id="AF005667">
    <property type="protein sequence ID" value="AAB62886.1"/>
    <property type="status" value="JOINED"/>
    <property type="molecule type" value="Genomic_DNA"/>
</dbReference>
<dbReference type="EMBL" id="AY297813">
    <property type="protein sequence ID" value="AAP43692.1"/>
    <property type="molecule type" value="Genomic_DNA"/>
</dbReference>
<dbReference type="EMBL" id="AL009172">
    <property type="status" value="NOT_ANNOTATED_CDS"/>
    <property type="molecule type" value="Genomic_DNA"/>
</dbReference>
<dbReference type="EMBL" id="BC015756">
    <property type="protein sequence ID" value="AAH15756.1"/>
    <property type="molecule type" value="mRNA"/>
</dbReference>
<dbReference type="CCDS" id="CCDS14282.1"/>
<dbReference type="PIR" id="S29126">
    <property type="entry name" value="S29126"/>
</dbReference>
<dbReference type="RefSeq" id="NP_001138724.1">
    <property type="nucleotide sequence ID" value="NM_001145252.3"/>
</dbReference>
<dbReference type="RefSeq" id="NP_002612.1">
    <property type="nucleotide sequence ID" value="NM_002621.2"/>
</dbReference>
<dbReference type="PDB" id="1W0R">
    <property type="method" value="X-ray"/>
    <property type="chains" value="A/B=28-469"/>
</dbReference>
<dbReference type="PDB" id="1W0S">
    <property type="method" value="X-ray"/>
    <property type="chains" value="A/B/C=28-469"/>
</dbReference>
<dbReference type="PDB" id="6RUR">
    <property type="method" value="X-ray"/>
    <property type="resolution" value="6.00 A"/>
    <property type="chains" value="A=28-255, B=256-469"/>
</dbReference>
<dbReference type="PDB" id="6RUS">
    <property type="method" value="X-ray"/>
    <property type="resolution" value="2.80 A"/>
    <property type="chains" value="A=28-255, B=256-469"/>
</dbReference>
<dbReference type="PDB" id="6RUV">
    <property type="method" value="X-ray"/>
    <property type="resolution" value="6.15 A"/>
    <property type="chains" value="U/X=28-191, V/Y=256-469"/>
</dbReference>
<dbReference type="PDB" id="6RV6">
    <property type="method" value="X-ray"/>
    <property type="resolution" value="3.51 A"/>
    <property type="chains" value="A=28-191, B=256-469"/>
</dbReference>
<dbReference type="PDB" id="6S08">
    <property type="method" value="X-ray"/>
    <property type="resolution" value="2.03 A"/>
    <property type="chains" value="A=256-469, B=26-132"/>
</dbReference>
<dbReference type="PDB" id="6S0A">
    <property type="method" value="X-ray"/>
    <property type="resolution" value="2.52 A"/>
    <property type="chains" value="A=256-469, B=26-191"/>
</dbReference>
<dbReference type="PDB" id="6S0B">
    <property type="method" value="X-ray"/>
    <property type="resolution" value="2.31 A"/>
    <property type="chains" value="A=256-469, B=26-132"/>
</dbReference>
<dbReference type="PDB" id="6SEJ">
    <property type="method" value="X-ray"/>
    <property type="resolution" value="3.50 A"/>
    <property type="chains" value="A=28-191, B=256-469"/>
</dbReference>
<dbReference type="PDB" id="7B26">
    <property type="method" value="X-ray"/>
    <property type="resolution" value="3.40 A"/>
    <property type="chains" value="A=1-134, B=256-469"/>
</dbReference>
<dbReference type="PDB" id="7NOZ">
    <property type="method" value="X-ray"/>
    <property type="resolution" value="3.90 A"/>
    <property type="chains" value="C=28-190, D=255-461"/>
</dbReference>
<dbReference type="PDB" id="8Q6R">
    <property type="method" value="X-ray"/>
    <property type="resolution" value="1.90 A"/>
    <property type="chains" value="C/E=28-135, D/F=256-469"/>
</dbReference>
<dbReference type="PDBsum" id="1W0R"/>
<dbReference type="PDBsum" id="1W0S"/>
<dbReference type="PDBsum" id="6RUR"/>
<dbReference type="PDBsum" id="6RUS"/>
<dbReference type="PDBsum" id="6RUV"/>
<dbReference type="PDBsum" id="6RV6"/>
<dbReference type="PDBsum" id="6S08"/>
<dbReference type="PDBsum" id="6S0A"/>
<dbReference type="PDBsum" id="6S0B"/>
<dbReference type="PDBsum" id="6SEJ"/>
<dbReference type="PDBsum" id="7B26"/>
<dbReference type="PDBsum" id="7NOZ"/>
<dbReference type="PDBsum" id="8Q6R"/>
<dbReference type="EMDB" id="EMD-2402"/>
<dbReference type="EMDB" id="EMD-2403"/>
<dbReference type="SASBDB" id="P27918"/>
<dbReference type="SMR" id="P27918"/>
<dbReference type="BioGRID" id="111222">
    <property type="interactions" value="50"/>
</dbReference>
<dbReference type="ComplexPortal" id="CPX-5602">
    <property type="entry name" value="Alternative pathway pathogen cell-bound C3 convertase complex C3bBbP"/>
</dbReference>
<dbReference type="ComplexPortal" id="CPX-5605">
    <property type="entry name" value="Alternative pathway pathogen cell-bound C5 convertase complex C3bBbC3bP"/>
</dbReference>
<dbReference type="CORUM" id="P27918"/>
<dbReference type="FunCoup" id="P27918">
    <property type="interactions" value="58"/>
</dbReference>
<dbReference type="IntAct" id="P27918">
    <property type="interactions" value="50"/>
</dbReference>
<dbReference type="STRING" id="9606.ENSP00000247153"/>
<dbReference type="GlyCosmos" id="P27918">
    <property type="glycosylation" value="20 sites, No reported glycans"/>
</dbReference>
<dbReference type="GlyGen" id="P27918">
    <property type="glycosylation" value="20 sites, 1 N-linked glycan (1 site)"/>
</dbReference>
<dbReference type="iPTMnet" id="P27918"/>
<dbReference type="PhosphoSitePlus" id="P27918"/>
<dbReference type="BioMuta" id="CFP"/>
<dbReference type="DMDM" id="464473"/>
<dbReference type="MassIVE" id="P27918"/>
<dbReference type="PaxDb" id="9606-ENSP00000247153"/>
<dbReference type="PeptideAtlas" id="P27918"/>
<dbReference type="ProteomicsDB" id="54426"/>
<dbReference type="ABCD" id="P27918">
    <property type="antibodies" value="21 sequenced antibodies"/>
</dbReference>
<dbReference type="Antibodypedia" id="11427">
    <property type="antibodies" value="618 antibodies from 35 providers"/>
</dbReference>
<dbReference type="DNASU" id="5199"/>
<dbReference type="Ensembl" id="ENST00000247153.7">
    <property type="protein sequence ID" value="ENSP00000247153.3"/>
    <property type="gene ID" value="ENSG00000126759.14"/>
</dbReference>
<dbReference type="Ensembl" id="ENST00000396992.8">
    <property type="protein sequence ID" value="ENSP00000380189.3"/>
    <property type="gene ID" value="ENSG00000126759.14"/>
</dbReference>
<dbReference type="GeneID" id="5199"/>
<dbReference type="KEGG" id="hsa:5199"/>
<dbReference type="MANE-Select" id="ENST00000396992.8">
    <property type="protein sequence ID" value="ENSP00000380189.3"/>
    <property type="RefSeq nucleotide sequence ID" value="NM_001145252.3"/>
    <property type="RefSeq protein sequence ID" value="NP_001138724.1"/>
</dbReference>
<dbReference type="UCSC" id="uc004dig.5">
    <property type="organism name" value="human"/>
</dbReference>
<dbReference type="AGR" id="HGNC:8864"/>
<dbReference type="CTD" id="5199"/>
<dbReference type="DisGeNET" id="5199"/>
<dbReference type="GeneCards" id="CFP"/>
<dbReference type="HGNC" id="HGNC:8864">
    <property type="gene designation" value="CFP"/>
</dbReference>
<dbReference type="HPA" id="ENSG00000126759">
    <property type="expression patterns" value="Group enriched (bone marrow, lymphoid tissue)"/>
</dbReference>
<dbReference type="MalaCards" id="CFP"/>
<dbReference type="MIM" id="300383">
    <property type="type" value="gene"/>
</dbReference>
<dbReference type="MIM" id="312060">
    <property type="type" value="phenotype"/>
</dbReference>
<dbReference type="neXtProt" id="NX_P27918"/>
<dbReference type="OpenTargets" id="ENSG00000126759"/>
<dbReference type="Orphanet" id="2966">
    <property type="disease" value="Properdin deficiency"/>
</dbReference>
<dbReference type="PharmGKB" id="PA33206"/>
<dbReference type="VEuPathDB" id="HostDB:ENSG00000126759"/>
<dbReference type="eggNOG" id="KOG4475">
    <property type="taxonomic scope" value="Eukaryota"/>
</dbReference>
<dbReference type="GeneTree" id="ENSGT00940000161209"/>
<dbReference type="InParanoid" id="P27918"/>
<dbReference type="OMA" id="CQACRSP"/>
<dbReference type="OrthoDB" id="446173at2759"/>
<dbReference type="PAN-GO" id="P27918">
    <property type="GO annotations" value="0 GO annotations based on evolutionary models"/>
</dbReference>
<dbReference type="PhylomeDB" id="P27918"/>
<dbReference type="TreeFam" id="TF315491"/>
<dbReference type="PathwayCommons" id="P27918"/>
<dbReference type="Reactome" id="R-HSA-173736">
    <property type="pathway name" value="Alternative complement activation"/>
</dbReference>
<dbReference type="Reactome" id="R-HSA-174577">
    <property type="pathway name" value="Activation of C3 and C5"/>
</dbReference>
<dbReference type="Reactome" id="R-HSA-5083635">
    <property type="pathway name" value="Defective B3GALTL causes PpS"/>
</dbReference>
<dbReference type="Reactome" id="R-HSA-5173214">
    <property type="pathway name" value="O-glycosylation of TSR domain-containing proteins"/>
</dbReference>
<dbReference type="Reactome" id="R-HSA-6798695">
    <property type="pathway name" value="Neutrophil degranulation"/>
</dbReference>
<dbReference type="Reactome" id="R-HSA-977606">
    <property type="pathway name" value="Regulation of Complement cascade"/>
</dbReference>
<dbReference type="SignaLink" id="P27918"/>
<dbReference type="BioGRID-ORCS" id="5199">
    <property type="hits" value="10 hits in 771 CRISPR screens"/>
</dbReference>
<dbReference type="ChiTaRS" id="CFP">
    <property type="organism name" value="human"/>
</dbReference>
<dbReference type="EvolutionaryTrace" id="P27918"/>
<dbReference type="GenomeRNAi" id="5199"/>
<dbReference type="Pharos" id="P27918">
    <property type="development level" value="Tbio"/>
</dbReference>
<dbReference type="PRO" id="PR:P27918"/>
<dbReference type="Proteomes" id="UP000005640">
    <property type="component" value="Chromosome X"/>
</dbReference>
<dbReference type="RNAct" id="P27918">
    <property type="molecule type" value="protein"/>
</dbReference>
<dbReference type="Bgee" id="ENSG00000126759">
    <property type="expression patterns" value="Expressed in granulocyte and 98 other cell types or tissues"/>
</dbReference>
<dbReference type="ExpressionAtlas" id="P27918">
    <property type="expression patterns" value="baseline and differential"/>
</dbReference>
<dbReference type="GO" id="GO:0098548">
    <property type="term" value="C:cytoplasmic side of Golgi membrane"/>
    <property type="evidence" value="ECO:0000314"/>
    <property type="project" value="ComplexPortal"/>
</dbReference>
<dbReference type="GO" id="GO:0005788">
    <property type="term" value="C:endoplasmic reticulum lumen"/>
    <property type="evidence" value="ECO:0000304"/>
    <property type="project" value="Reactome"/>
</dbReference>
<dbReference type="GO" id="GO:0005576">
    <property type="term" value="C:extracellular region"/>
    <property type="evidence" value="ECO:0000304"/>
    <property type="project" value="Reactome"/>
</dbReference>
<dbReference type="GO" id="GO:0005615">
    <property type="term" value="C:extracellular space"/>
    <property type="evidence" value="ECO:0000304"/>
    <property type="project" value="ProtInc"/>
</dbReference>
<dbReference type="GO" id="GO:0035580">
    <property type="term" value="C:specific granule lumen"/>
    <property type="evidence" value="ECO:0000304"/>
    <property type="project" value="Reactome"/>
</dbReference>
<dbReference type="GO" id="GO:1904724">
    <property type="term" value="C:tertiary granule lumen"/>
    <property type="evidence" value="ECO:0000304"/>
    <property type="project" value="Reactome"/>
</dbReference>
<dbReference type="GO" id="GO:0006956">
    <property type="term" value="P:complement activation"/>
    <property type="evidence" value="ECO:0000303"/>
    <property type="project" value="ComplexPortal"/>
</dbReference>
<dbReference type="GO" id="GO:0006957">
    <property type="term" value="P:complement activation, alternative pathway"/>
    <property type="evidence" value="ECO:0007669"/>
    <property type="project" value="UniProtKB-KW"/>
</dbReference>
<dbReference type="GO" id="GO:0042742">
    <property type="term" value="P:defense response to bacterium"/>
    <property type="evidence" value="ECO:0000304"/>
    <property type="project" value="ProtInc"/>
</dbReference>
<dbReference type="GO" id="GO:0006955">
    <property type="term" value="P:immune response"/>
    <property type="evidence" value="ECO:0000304"/>
    <property type="project" value="ProtInc"/>
</dbReference>
<dbReference type="GO" id="GO:0050778">
    <property type="term" value="P:positive regulation of immune response"/>
    <property type="evidence" value="ECO:0000303"/>
    <property type="project" value="ComplexPortal"/>
</dbReference>
<dbReference type="GO" id="GO:1903028">
    <property type="term" value="P:positive regulation of opsonization"/>
    <property type="evidence" value="ECO:0000303"/>
    <property type="project" value="ComplexPortal"/>
</dbReference>
<dbReference type="FunFam" id="2.20.100.10:FF:000133">
    <property type="entry name" value="Complement factor properdin"/>
    <property type="match status" value="1"/>
</dbReference>
<dbReference type="FunFam" id="2.20.100.10:FF:000143">
    <property type="entry name" value="Complement factor properdin"/>
    <property type="match status" value="1"/>
</dbReference>
<dbReference type="FunFam" id="2.20.100.10:FF:000001">
    <property type="entry name" value="semaphorin-5A isoform X1"/>
    <property type="match status" value="3"/>
</dbReference>
<dbReference type="Gene3D" id="2.20.100.10">
    <property type="entry name" value="Thrombospondin type-1 (TSP1) repeat"/>
    <property type="match status" value="6"/>
</dbReference>
<dbReference type="InterPro" id="IPR049536">
    <property type="entry name" value="CFP_TSR-0"/>
</dbReference>
<dbReference type="InterPro" id="IPR054019">
    <property type="entry name" value="CFP_TSR_C"/>
</dbReference>
<dbReference type="InterPro" id="IPR052065">
    <property type="entry name" value="Compl_asym_regulator"/>
</dbReference>
<dbReference type="InterPro" id="IPR000884">
    <property type="entry name" value="TSP1_rpt"/>
</dbReference>
<dbReference type="InterPro" id="IPR036383">
    <property type="entry name" value="TSP1_rpt_sf"/>
</dbReference>
<dbReference type="PANTHER" id="PTHR22906">
    <property type="entry name" value="PROPERDIN"/>
    <property type="match status" value="1"/>
</dbReference>
<dbReference type="PANTHER" id="PTHR22906:SF21">
    <property type="entry name" value="SEMA DOMAIN-CONTAINING PROTEIN"/>
    <property type="match status" value="1"/>
</dbReference>
<dbReference type="Pfam" id="PF22195">
    <property type="entry name" value="TSP1_CFP_C"/>
    <property type="match status" value="1"/>
</dbReference>
<dbReference type="Pfam" id="PF00090">
    <property type="entry name" value="TSP_1"/>
    <property type="match status" value="5"/>
</dbReference>
<dbReference type="Pfam" id="PF18487">
    <property type="entry name" value="TSR"/>
    <property type="match status" value="1"/>
</dbReference>
<dbReference type="PRINTS" id="PR01705">
    <property type="entry name" value="TSP1REPEAT"/>
</dbReference>
<dbReference type="SMART" id="SM00209">
    <property type="entry name" value="TSP1"/>
    <property type="match status" value="6"/>
</dbReference>
<dbReference type="SUPFAM" id="SSF82895">
    <property type="entry name" value="TSP-1 type 1 repeat"/>
    <property type="match status" value="6"/>
</dbReference>
<dbReference type="PROSITE" id="PS50092">
    <property type="entry name" value="TSP1"/>
    <property type="match status" value="6"/>
</dbReference>
<protein>
    <recommendedName>
        <fullName evidence="19">Properdin</fullName>
    </recommendedName>
    <alternativeName>
        <fullName>Complement factor P</fullName>
    </alternativeName>
</protein>
<accession>P27918</accession>
<accession>O15134</accession>
<accession>O15135</accession>
<accession>O15136</accession>
<accession>O75826</accession>
<organism>
    <name type="scientific">Homo sapiens</name>
    <name type="common">Human</name>
    <dbReference type="NCBI Taxonomy" id="9606"/>
    <lineage>
        <taxon>Eukaryota</taxon>
        <taxon>Metazoa</taxon>
        <taxon>Chordata</taxon>
        <taxon>Craniata</taxon>
        <taxon>Vertebrata</taxon>
        <taxon>Euteleostomi</taxon>
        <taxon>Mammalia</taxon>
        <taxon>Eutheria</taxon>
        <taxon>Euarchontoglires</taxon>
        <taxon>Primates</taxon>
        <taxon>Haplorrhini</taxon>
        <taxon>Catarrhini</taxon>
        <taxon>Hominidae</taxon>
        <taxon>Homo</taxon>
    </lineage>
</organism>
<sequence length="469" mass="51276">MITEGAQAPRLLLPPLLLLLTLPATGSDPVLCFTQYEESSGKCKGLLGGGVSVEDCCLNTAFAYQKRSGGLCQPCRSPRWSLWSTWAPCSVTCSEGSQLRYRRCVGWNGQCSGKVAPGTLEWQLQACEDQQCCPEMGGWSGWGPWEPCSVTCSKGTRTRRRACNHPAPKCGGHCPGQAQESEACDTQQVCPTHGAWATWGPWTPCSASCHGGPHEPKETRSRKCSAPEPSQKPPGKPCPGLAYEQRRCTGLPPCPVAGGWGPWGPVSPCPVTCGLGQTMEQRTCNHPVPQHGGPFCAGDATRTHICNTAVPCPVDGEWDSWGEWSPCIRRNMKSISCQEIPGQQSRGRTCRGRKFDGHRCAGQQQDIRHCYSIQHCPLKGSWSEWSTWGLCMPPCGPNPTRARQRLCTPLLPKYPPTVSMVEGQGEKNVTFWGRPLPRCEELQGQKLVVEEKRPCLHVPACKDPEEEEL</sequence>
<comment type="function">
    <text evidence="7 11 12 13 17">A positive regulator of the alternate pathway (AP) of complement (PubMed:16301317, PubMed:20382442, PubMed:28264884, PubMed:9748277). It binds to and stabilizes the C3- and C5-convertase enzyme complexes (PubMed:16301317, PubMed:20382442, PubMed:28264884, PubMed:9748277). Inhibits CFI-CFH mediated degradation of Complement C3 beta chain (C3b) (PubMed:31507604).</text>
</comment>
<comment type="subunit">
    <text evidence="6 7 11 12 13 17">In plasma, properdin exists as dimers, trimers or tetramers in the relative proportions of 26:54:20 (PubMed:15491616, PubMed:20382442, PubMed:28264884, PubMed:31507604). Interacts with the pro-C3-convertase enzyme complex (C3b-Bb) comprised of Complement C3 beta chain (C3b) and the Complement factor B Bb fragment (Bb), where it binds (via its TSP type-1 5 domain) with C3b and Bb (PubMed:16301317, PubMed:28264884, PubMed:31507604, PubMed:9748277). This interaction stabilizes the complex and allows it to become the active C3-convertase enzyme complex (C3b-Bb-FP) (PubMed:28264884, PubMed:31507604). Interacts with C3b (PubMed:28264884, PubMed:31507604). Interacts with CFB (PubMed:31507604).</text>
</comment>
<comment type="interaction">
    <interactant intactId="EBI-9038570">
        <id>P27918</id>
    </interactant>
    <interactant intactId="EBI-21986906">
        <id>P0C7Q2</id>
        <label>ARMS2</label>
    </interactant>
    <organismsDiffer>false</organismsDiffer>
    <experiments>8</experiments>
</comment>
<comment type="interaction">
    <interactant intactId="EBI-9038570">
        <id>P27918</id>
    </interactant>
    <interactant intactId="EBI-11977289">
        <id>Q9H503-2</id>
        <label>BANF2</label>
    </interactant>
    <organismsDiffer>false</organismsDiffer>
    <experiments>3</experiments>
</comment>
<comment type="interaction">
    <interactant intactId="EBI-9038570">
        <id>P27918</id>
    </interactant>
    <interactant intactId="EBI-749051">
        <id>Q8IYR0</id>
        <label>CFAP206</label>
    </interactant>
    <organismsDiffer>false</organismsDiffer>
    <experiments>3</experiments>
</comment>
<comment type="interaction">
    <interactant intactId="EBI-9038570">
        <id>P27918</id>
    </interactant>
    <interactant intactId="EBI-22033617">
        <id>Q92496-1</id>
        <label>CFHR4</label>
    </interactant>
    <organismsDiffer>false</organismsDiffer>
    <experiments>2</experiments>
</comment>
<comment type="interaction">
    <interactant intactId="EBI-9038570">
        <id>P27918</id>
    </interactant>
    <interactant intactId="EBI-22033638">
        <id>Q92496-3</id>
        <label>CFHR4</label>
    </interactant>
    <organismsDiffer>false</organismsDiffer>
    <experiments>2</experiments>
</comment>
<comment type="interaction">
    <interactant intactId="EBI-9038570">
        <id>P27918</id>
    </interactant>
    <interactant intactId="EBI-22033103">
        <id>PRO_0000023526</id>
        <label>CRP</label>
        <dbReference type="UniProtKB" id="P02741"/>
    </interactant>
    <organismsDiffer>false</organismsDiffer>
    <experiments>2</experiments>
</comment>
<comment type="interaction">
    <interactant intactId="EBI-9038570">
        <id>P27918</id>
    </interactant>
    <interactant intactId="EBI-3867333">
        <id>A8MQ03</id>
        <label>CYSRT1</label>
    </interactant>
    <organismsDiffer>false</organismsDiffer>
    <experiments>3</experiments>
</comment>
<comment type="interaction">
    <interactant intactId="EBI-9038570">
        <id>P27918</id>
    </interactant>
    <interactant intactId="EBI-750641">
        <id>Q5TD97</id>
        <label>FHL5</label>
    </interactant>
    <organismsDiffer>false</organismsDiffer>
    <experiments>3</experiments>
</comment>
<comment type="interaction">
    <interactant intactId="EBI-9038570">
        <id>P27918</id>
    </interactant>
    <interactant intactId="EBI-744771">
        <id>O75344</id>
        <label>FKBP6</label>
    </interactant>
    <organismsDiffer>false</organismsDiffer>
    <experiments>4</experiments>
</comment>
<comment type="interaction">
    <interactant intactId="EBI-9038570">
        <id>P27918</id>
    </interactant>
    <interactant intactId="EBI-356700">
        <id>P57678</id>
        <label>GEMIN4</label>
    </interactant>
    <organismsDiffer>false</organismsDiffer>
    <experiments>3</experiments>
</comment>
<comment type="interaction">
    <interactant intactId="EBI-9038570">
        <id>P27918</id>
    </interactant>
    <interactant intactId="EBI-11975289">
        <id>Q9Y223-2</id>
        <label>GNE</label>
    </interactant>
    <organismsDiffer>false</organismsDiffer>
    <experiments>3</experiments>
</comment>
<comment type="interaction">
    <interactant intactId="EBI-9038570">
        <id>P27918</id>
    </interactant>
    <interactant intactId="EBI-5460660">
        <id>Q96MH2</id>
        <label>HEXIM2</label>
    </interactant>
    <organismsDiffer>false</organismsDiffer>
    <experiments>3</experiments>
</comment>
<comment type="interaction">
    <interactant intactId="EBI-9038570">
        <id>P27918</id>
    </interactant>
    <interactant intactId="EBI-740785">
        <id>P49639</id>
        <label>HOXA1</label>
    </interactant>
    <organismsDiffer>false</organismsDiffer>
    <experiments>3</experiments>
</comment>
<comment type="interaction">
    <interactant intactId="EBI-9038570">
        <id>P27918</id>
    </interactant>
    <interactant intactId="EBI-4397613">
        <id>Q7L273</id>
        <label>KCTD9</label>
    </interactant>
    <organismsDiffer>false</organismsDiffer>
    <experiments>3</experiments>
</comment>
<comment type="interaction">
    <interactant intactId="EBI-9038570">
        <id>P27918</id>
    </interactant>
    <interactant intactId="EBI-6426443">
        <id>Q2WGJ6</id>
        <label>KLHL38</label>
    </interactant>
    <organismsDiffer>false</organismsDiffer>
    <experiments>3</experiments>
</comment>
<comment type="interaction">
    <interactant intactId="EBI-9038570">
        <id>P27918</id>
    </interactant>
    <interactant intactId="EBI-1052037">
        <id>Q8IUC1</id>
        <label>KRTAP11-1</label>
    </interactant>
    <organismsDiffer>false</organismsDiffer>
    <experiments>3</experiments>
</comment>
<comment type="interaction">
    <interactant intactId="EBI-9038570">
        <id>P27918</id>
    </interactant>
    <interactant intactId="EBI-10176379">
        <id>P59991</id>
        <label>KRTAP12-2</label>
    </interactant>
    <organismsDiffer>false</organismsDiffer>
    <experiments>3</experiments>
</comment>
<comment type="interaction">
    <interactant intactId="EBI-9038570">
        <id>P27918</id>
    </interactant>
    <interactant intactId="EBI-9996449">
        <id>Q9BYR8</id>
        <label>KRTAP3-1</label>
    </interactant>
    <organismsDiffer>false</organismsDiffer>
    <experiments>3</experiments>
</comment>
<comment type="interaction">
    <interactant intactId="EBI-9038570">
        <id>P27918</id>
    </interactant>
    <interactant intactId="EBI-11962084">
        <id>Q3LI66</id>
        <label>KRTAP6-2</label>
    </interactant>
    <organismsDiffer>false</organismsDiffer>
    <experiments>5</experiments>
</comment>
<comment type="interaction">
    <interactant intactId="EBI-9038570">
        <id>P27918</id>
    </interactant>
    <interactant intactId="EBI-11962058">
        <id>Q5T7P2</id>
        <label>LCE1A</label>
    </interactant>
    <organismsDiffer>false</organismsDiffer>
    <experiments>3</experiments>
</comment>
<comment type="interaction">
    <interactant intactId="EBI-9038570">
        <id>P27918</id>
    </interactant>
    <interactant intactId="EBI-2341787">
        <id>Q17RB8</id>
        <label>LONRF1</label>
    </interactant>
    <organismsDiffer>false</organismsDiffer>
    <experiments>3</experiments>
</comment>
<comment type="interaction">
    <interactant intactId="EBI-9038570">
        <id>P27918</id>
    </interactant>
    <interactant intactId="EBI-10172526">
        <id>Q9UJV3-2</id>
        <label>MID2</label>
    </interactant>
    <organismsDiffer>false</organismsDiffer>
    <experiments>3</experiments>
</comment>
<comment type="interaction">
    <interactant intactId="EBI-9038570">
        <id>P27918</id>
    </interactant>
    <interactant intactId="EBI-2556173">
        <id>P05164</id>
        <label>MPO</label>
    </interactant>
    <organismsDiffer>false</organismsDiffer>
    <experiments>4</experiments>
</comment>
<comment type="interaction">
    <interactant intactId="EBI-9038570">
        <id>P27918</id>
    </interactant>
    <interactant intactId="EBI-11750983">
        <id>Q9HC98-4</id>
        <label>NEK6</label>
    </interactant>
    <organismsDiffer>false</organismsDiffer>
    <experiments>3</experiments>
</comment>
<comment type="interaction">
    <interactant intactId="EBI-9038570">
        <id>P27918</id>
    </interactant>
    <interactant intactId="EBI-12025760">
        <id>Q86UR1-2</id>
        <label>NOXA1</label>
    </interactant>
    <organismsDiffer>false</organismsDiffer>
    <experiments>3</experiments>
</comment>
<comment type="interaction">
    <interactant intactId="EBI-9038570">
        <id>P27918</id>
    </interactant>
    <interactant intactId="EBI-1053424">
        <id>O43741</id>
        <label>PRKAB2</label>
    </interactant>
    <organismsDiffer>false</organismsDiffer>
    <experiments>3</experiments>
</comment>
<comment type="interaction">
    <interactant intactId="EBI-9038570">
        <id>P27918</id>
    </interactant>
    <interactant intactId="EBI-10253121">
        <id>Q6P9E2</id>
        <label>RECK</label>
    </interactant>
    <organismsDiffer>false</organismsDiffer>
    <experiments>3</experiments>
</comment>
<comment type="interaction">
    <interactant intactId="EBI-9038570">
        <id>P27918</id>
    </interactant>
    <interactant intactId="EBI-355653">
        <id>Q92922</id>
        <label>SMARCC1</label>
    </interactant>
    <organismsDiffer>false</organismsDiffer>
    <experiments>3</experiments>
</comment>
<comment type="interaction">
    <interactant intactId="EBI-9038570">
        <id>P27918</id>
    </interactant>
    <interactant intactId="EBI-11959123">
        <id>Q99932-2</id>
        <label>SPAG8</label>
    </interactant>
    <organismsDiffer>false</organismsDiffer>
    <experiments>4</experiments>
</comment>
<comment type="interaction">
    <interactant intactId="EBI-9038570">
        <id>P27918</id>
    </interactant>
    <interactant intactId="EBI-749295">
        <id>O75716</id>
        <label>STK16</label>
    </interactant>
    <organismsDiffer>false</organismsDiffer>
    <experiments>3</experiments>
</comment>
<comment type="interaction">
    <interactant intactId="EBI-9038570">
        <id>P27918</id>
    </interactant>
    <interactant intactId="EBI-10191303">
        <id>O95231</id>
        <label>VENTX</label>
    </interactant>
    <organismsDiffer>false</organismsDiffer>
    <experiments>5</experiments>
</comment>
<comment type="interaction">
    <interactant intactId="EBI-9038570">
        <id>P27918</id>
    </interactant>
    <interactant intactId="EBI-373456">
        <id>Q9Y3S2</id>
        <label>ZNF330</label>
    </interactant>
    <organismsDiffer>false</organismsDiffer>
    <experiments>3</experiments>
</comment>
<comment type="interaction">
    <interactant intactId="EBI-9038570">
        <id>P27918</id>
    </interactant>
    <interactant intactId="EBI-744257">
        <id>Q96IQ9</id>
        <label>ZNF414</label>
    </interactant>
    <organismsDiffer>false</organismsDiffer>
    <experiments>3</experiments>
</comment>
<comment type="interaction">
    <interactant intactId="EBI-9038570">
        <id>P27918</id>
    </interactant>
    <interactant intactId="EBI-11707971">
        <id>Q8C567</id>
        <label>Ncr1</label>
    </interactant>
    <organismsDiffer>true</organismsDiffer>
    <experiments>2</experiments>
</comment>
<comment type="interaction">
    <interactant intactId="EBI-15183949">
        <id>PRO_0000035863</id>
    </interactant>
    <interactant intactId="EBI-13915737">
        <id>O76036</id>
        <label>NCR1</label>
    </interactant>
    <organismsDiffer>false</organismsDiffer>
    <experiments>5</experiments>
</comment>
<comment type="interaction">
    <interactant intactId="EBI-15183949">
        <id>PRO_0000035863</id>
    </interactant>
    <interactant intactId="EBI-11707971">
        <id>Q8C567</id>
        <label>Ncr1</label>
    </interactant>
    <organismsDiffer>true</organismsDiffer>
    <experiments>3</experiments>
</comment>
<comment type="subcellular location">
    <subcellularLocation>
        <location evidence="12 13">Secreted</location>
    </subcellularLocation>
</comment>
<comment type="domain">
    <text evidence="6 12 13">TSP type-1 domain 0 binds to TSP type-1 domain 4, and TSP type-1 domain 1 binds to TSP type-1 domain 6 (PubMed:15491616, PubMed:28264884, PubMed:31507604). These interactions mediate multimerization (PubMed:15491616, PubMed:28264884, PubMed:31507604).</text>
</comment>
<comment type="disease" evidence="4 12 13 15 16">
    <disease id="DI-02220">
        <name>Properdin deficiency</name>
        <acronym>PFD</acronym>
        <description>Results in higher susceptibility to bacterial infections; especially to meningococcal infections. Three phenotypes have been reported: complete deficiency (type I), incomplete deficiency (type II), and dysfunction of properdin (type III).</description>
        <dbReference type="MIM" id="312060"/>
    </disease>
    <text>The disease is caused by variants affecting the gene represented in this entry.</text>
</comment>
<comment type="online information" name="CFPbase">
    <link uri="https://databases.lovd.nl/shared/genes/CFP"/>
    <text>CFP mutation db</text>
</comment>
<comment type="online information" name="Wikipedia">
    <link uri="https://en.wikipedia.org/wiki/Properdin"/>
    <text>Properdin entry</text>
</comment>
<reference key="1">
    <citation type="journal article" date="1991" name="Eur. J. Immunol.">
        <title>Molecular cloning of the cDNA coding for properdin, a positive regulator of the alternative pathway of human complement.</title>
        <authorList>
            <person name="Nolan K.F."/>
            <person name="Schwaeble W."/>
            <person name="Kaluz S."/>
            <person name="Dierich M.P."/>
            <person name="Reid K.B.M."/>
        </authorList>
    </citation>
    <scope>NUCLEOTIDE SEQUENCE [MRNA]</scope>
</reference>
<reference key="2">
    <citation type="journal article" date="1992" name="Biochem. J.">
        <title>Characterization of the human properdin gene.</title>
        <authorList>
            <person name="Nolan K.F."/>
            <person name="Kaluz S."/>
            <person name="Higgins J.M."/>
            <person name="Goundis D."/>
            <person name="Reid K.B.M."/>
        </authorList>
    </citation>
    <scope>NUCLEOTIDE SEQUENCE [GENOMIC DNA]</scope>
</reference>
<reference key="3">
    <citation type="journal article" date="1992" name="J. Lab. Clin. Med.">
        <title>Detection of properdin mRNA in human peripheral blood monocytes and spleen.</title>
        <authorList>
            <person name="Weiler J.M."/>
            <person name="Maves K.K."/>
        </authorList>
    </citation>
    <scope>NUCLEOTIDE SEQUENCE [MRNA]</scope>
</reference>
<reference key="4">
    <citation type="journal article" date="1995" name="Genomics">
        <title>Sequence-based analysis of properdin deficiency: identification of point mutations in two phenotypic forms of an X-linked immunodeficiency.</title>
        <authorList>
            <person name="Westberg J."/>
            <person name="Fredrikson G.N."/>
            <person name="Truedsson L."/>
            <person name="Sjoeholm A.G."/>
            <person name="Uhlen M."/>
        </authorList>
    </citation>
    <scope>NUCLEOTIDE SEQUENCE [GENOMIC DNA]</scope>
    <scope>VARIANT PFC TYPE-II DEFICIENCY TRP-100</scope>
</reference>
<reference key="5">
    <citation type="submission" date="2003-05" db="EMBL/GenBank/DDBJ databases">
        <authorList>
            <consortium name="SeattleSNPs variation discovery resource"/>
        </authorList>
    </citation>
    <scope>NUCLEOTIDE SEQUENCE [GENOMIC DNA]</scope>
    <scope>VARIANTS MET-53; LEU-204 AND SER-250</scope>
</reference>
<reference key="6">
    <citation type="journal article" date="2005" name="Nature">
        <title>The DNA sequence of the human X chromosome.</title>
        <authorList>
            <person name="Ross M.T."/>
            <person name="Grafham D.V."/>
            <person name="Coffey A.J."/>
            <person name="Scherer S."/>
            <person name="McLay K."/>
            <person name="Muzny D."/>
            <person name="Platzer M."/>
            <person name="Howell G.R."/>
            <person name="Burrows C."/>
            <person name="Bird C.P."/>
            <person name="Frankish A."/>
            <person name="Lovell F.L."/>
            <person name="Howe K.L."/>
            <person name="Ashurst J.L."/>
            <person name="Fulton R.S."/>
            <person name="Sudbrak R."/>
            <person name="Wen G."/>
            <person name="Jones M.C."/>
            <person name="Hurles M.E."/>
            <person name="Andrews T.D."/>
            <person name="Scott C.E."/>
            <person name="Searle S."/>
            <person name="Ramser J."/>
            <person name="Whittaker A."/>
            <person name="Deadman R."/>
            <person name="Carter N.P."/>
            <person name="Hunt S.E."/>
            <person name="Chen R."/>
            <person name="Cree A."/>
            <person name="Gunaratne P."/>
            <person name="Havlak P."/>
            <person name="Hodgson A."/>
            <person name="Metzker M.L."/>
            <person name="Richards S."/>
            <person name="Scott G."/>
            <person name="Steffen D."/>
            <person name="Sodergren E."/>
            <person name="Wheeler D.A."/>
            <person name="Worley K.C."/>
            <person name="Ainscough R."/>
            <person name="Ambrose K.D."/>
            <person name="Ansari-Lari M.A."/>
            <person name="Aradhya S."/>
            <person name="Ashwell R.I."/>
            <person name="Babbage A.K."/>
            <person name="Bagguley C.L."/>
            <person name="Ballabio A."/>
            <person name="Banerjee R."/>
            <person name="Barker G.E."/>
            <person name="Barlow K.F."/>
            <person name="Barrett I.P."/>
            <person name="Bates K.N."/>
            <person name="Beare D.M."/>
            <person name="Beasley H."/>
            <person name="Beasley O."/>
            <person name="Beck A."/>
            <person name="Bethel G."/>
            <person name="Blechschmidt K."/>
            <person name="Brady N."/>
            <person name="Bray-Allen S."/>
            <person name="Bridgeman A.M."/>
            <person name="Brown A.J."/>
            <person name="Brown M.J."/>
            <person name="Bonnin D."/>
            <person name="Bruford E.A."/>
            <person name="Buhay C."/>
            <person name="Burch P."/>
            <person name="Burford D."/>
            <person name="Burgess J."/>
            <person name="Burrill W."/>
            <person name="Burton J."/>
            <person name="Bye J.M."/>
            <person name="Carder C."/>
            <person name="Carrel L."/>
            <person name="Chako J."/>
            <person name="Chapman J.C."/>
            <person name="Chavez D."/>
            <person name="Chen E."/>
            <person name="Chen G."/>
            <person name="Chen Y."/>
            <person name="Chen Z."/>
            <person name="Chinault C."/>
            <person name="Ciccodicola A."/>
            <person name="Clark S.Y."/>
            <person name="Clarke G."/>
            <person name="Clee C.M."/>
            <person name="Clegg S."/>
            <person name="Clerc-Blankenburg K."/>
            <person name="Clifford K."/>
            <person name="Cobley V."/>
            <person name="Cole C.G."/>
            <person name="Conquer J.S."/>
            <person name="Corby N."/>
            <person name="Connor R.E."/>
            <person name="David R."/>
            <person name="Davies J."/>
            <person name="Davis C."/>
            <person name="Davis J."/>
            <person name="Delgado O."/>
            <person name="Deshazo D."/>
            <person name="Dhami P."/>
            <person name="Ding Y."/>
            <person name="Dinh H."/>
            <person name="Dodsworth S."/>
            <person name="Draper H."/>
            <person name="Dugan-Rocha S."/>
            <person name="Dunham A."/>
            <person name="Dunn M."/>
            <person name="Durbin K.J."/>
            <person name="Dutta I."/>
            <person name="Eades T."/>
            <person name="Ellwood M."/>
            <person name="Emery-Cohen A."/>
            <person name="Errington H."/>
            <person name="Evans K.L."/>
            <person name="Faulkner L."/>
            <person name="Francis F."/>
            <person name="Frankland J."/>
            <person name="Fraser A.E."/>
            <person name="Galgoczy P."/>
            <person name="Gilbert J."/>
            <person name="Gill R."/>
            <person name="Gloeckner G."/>
            <person name="Gregory S.G."/>
            <person name="Gribble S."/>
            <person name="Griffiths C."/>
            <person name="Grocock R."/>
            <person name="Gu Y."/>
            <person name="Gwilliam R."/>
            <person name="Hamilton C."/>
            <person name="Hart E.A."/>
            <person name="Hawes A."/>
            <person name="Heath P.D."/>
            <person name="Heitmann K."/>
            <person name="Hennig S."/>
            <person name="Hernandez J."/>
            <person name="Hinzmann B."/>
            <person name="Ho S."/>
            <person name="Hoffs M."/>
            <person name="Howden P.J."/>
            <person name="Huckle E.J."/>
            <person name="Hume J."/>
            <person name="Hunt P.J."/>
            <person name="Hunt A.R."/>
            <person name="Isherwood J."/>
            <person name="Jacob L."/>
            <person name="Johnson D."/>
            <person name="Jones S."/>
            <person name="de Jong P.J."/>
            <person name="Joseph S.S."/>
            <person name="Keenan S."/>
            <person name="Kelly S."/>
            <person name="Kershaw J.K."/>
            <person name="Khan Z."/>
            <person name="Kioschis P."/>
            <person name="Klages S."/>
            <person name="Knights A.J."/>
            <person name="Kosiura A."/>
            <person name="Kovar-Smith C."/>
            <person name="Laird G.K."/>
            <person name="Langford C."/>
            <person name="Lawlor S."/>
            <person name="Leversha M."/>
            <person name="Lewis L."/>
            <person name="Liu W."/>
            <person name="Lloyd C."/>
            <person name="Lloyd D.M."/>
            <person name="Loulseged H."/>
            <person name="Loveland J.E."/>
            <person name="Lovell J.D."/>
            <person name="Lozado R."/>
            <person name="Lu J."/>
            <person name="Lyne R."/>
            <person name="Ma J."/>
            <person name="Maheshwari M."/>
            <person name="Matthews L.H."/>
            <person name="McDowall J."/>
            <person name="McLaren S."/>
            <person name="McMurray A."/>
            <person name="Meidl P."/>
            <person name="Meitinger T."/>
            <person name="Milne S."/>
            <person name="Miner G."/>
            <person name="Mistry S.L."/>
            <person name="Morgan M."/>
            <person name="Morris S."/>
            <person name="Mueller I."/>
            <person name="Mullikin J.C."/>
            <person name="Nguyen N."/>
            <person name="Nordsiek G."/>
            <person name="Nyakatura G."/>
            <person name="O'dell C.N."/>
            <person name="Okwuonu G."/>
            <person name="Palmer S."/>
            <person name="Pandian R."/>
            <person name="Parker D."/>
            <person name="Parrish J."/>
            <person name="Pasternak S."/>
            <person name="Patel D."/>
            <person name="Pearce A.V."/>
            <person name="Pearson D.M."/>
            <person name="Pelan S.E."/>
            <person name="Perez L."/>
            <person name="Porter K.M."/>
            <person name="Ramsey Y."/>
            <person name="Reichwald K."/>
            <person name="Rhodes S."/>
            <person name="Ridler K.A."/>
            <person name="Schlessinger D."/>
            <person name="Schueler M.G."/>
            <person name="Sehra H.K."/>
            <person name="Shaw-Smith C."/>
            <person name="Shen H."/>
            <person name="Sheridan E.M."/>
            <person name="Shownkeen R."/>
            <person name="Skuce C.D."/>
            <person name="Smith M.L."/>
            <person name="Sotheran E.C."/>
            <person name="Steingruber H.E."/>
            <person name="Steward C.A."/>
            <person name="Storey R."/>
            <person name="Swann R.M."/>
            <person name="Swarbreck D."/>
            <person name="Tabor P.E."/>
            <person name="Taudien S."/>
            <person name="Taylor T."/>
            <person name="Teague B."/>
            <person name="Thomas K."/>
            <person name="Thorpe A."/>
            <person name="Timms K."/>
            <person name="Tracey A."/>
            <person name="Trevanion S."/>
            <person name="Tromans A.C."/>
            <person name="d'Urso M."/>
            <person name="Verduzco D."/>
            <person name="Villasana D."/>
            <person name="Waldron L."/>
            <person name="Wall M."/>
            <person name="Wang Q."/>
            <person name="Warren J."/>
            <person name="Warry G.L."/>
            <person name="Wei X."/>
            <person name="West A."/>
            <person name="Whitehead S.L."/>
            <person name="Whiteley M.N."/>
            <person name="Wilkinson J.E."/>
            <person name="Willey D.L."/>
            <person name="Williams G."/>
            <person name="Williams L."/>
            <person name="Williamson A."/>
            <person name="Williamson H."/>
            <person name="Wilming L."/>
            <person name="Woodmansey R.L."/>
            <person name="Wray P.W."/>
            <person name="Yen J."/>
            <person name="Zhang J."/>
            <person name="Zhou J."/>
            <person name="Zoghbi H."/>
            <person name="Zorilla S."/>
            <person name="Buck D."/>
            <person name="Reinhardt R."/>
            <person name="Poustka A."/>
            <person name="Rosenthal A."/>
            <person name="Lehrach H."/>
            <person name="Meindl A."/>
            <person name="Minx P.J."/>
            <person name="Hillier L.W."/>
            <person name="Willard H.F."/>
            <person name="Wilson R.K."/>
            <person name="Waterston R.H."/>
            <person name="Rice C.M."/>
            <person name="Vaudin M."/>
            <person name="Coulson A."/>
            <person name="Nelson D.L."/>
            <person name="Weinstock G."/>
            <person name="Sulston J.E."/>
            <person name="Durbin R.M."/>
            <person name="Hubbard T."/>
            <person name="Gibbs R.A."/>
            <person name="Beck S."/>
            <person name="Rogers J."/>
            <person name="Bentley D.R."/>
        </authorList>
    </citation>
    <scope>NUCLEOTIDE SEQUENCE [LARGE SCALE GENOMIC DNA]</scope>
</reference>
<reference key="7">
    <citation type="journal article" date="2004" name="Genome Res.">
        <title>The status, quality, and expansion of the NIH full-length cDNA project: the Mammalian Gene Collection (MGC).</title>
        <authorList>
            <consortium name="The MGC Project Team"/>
        </authorList>
    </citation>
    <scope>NUCLEOTIDE SEQUENCE [LARGE SCALE MRNA]</scope>
    <source>
        <tissue>Spleen</tissue>
    </source>
</reference>
<reference key="8">
    <citation type="journal article" date="1998" name="J. Biol. Chem.">
        <title>A conserved element in the serine protease domain of complement factor B.</title>
        <authorList>
            <person name="Hourcade D.E."/>
            <person name="Mitchell L.M."/>
            <person name="Oglesby T.J."/>
        </authorList>
    </citation>
    <scope>FUNCTION</scope>
    <scope>INTERACTION WITH COMPLEMENT C3B</scope>
</reference>
<reference key="9">
    <citation type="journal article" date="2000" name="J. Biol. Chem.">
        <title>Properdin, the positive regulator of complement, is highly C-mannosylated.</title>
        <authorList>
            <person name="Hartmann S."/>
            <person name="Hofsteenge J."/>
        </authorList>
    </citation>
    <scope>GLYCOSYLATION AT TRP-83; TRP-86; TRP-139; TRP-142; TRP-145; TRP-196; TRP-199; TRP-260; TRP-263; TRP-321; TRP-324; TRP-382; TRP-385 AND TRP-388</scope>
</reference>
<reference key="10">
    <citation type="journal article" date="2002" name="Mol. Cell. Proteomics">
        <title>C-mannosylation and O-fucosylation of thrombospondin type 1 repeats.</title>
        <authorList>
            <person name="Gonzalez de Peredo A."/>
            <person name="Klein D."/>
            <person name="Macek B."/>
            <person name="Hess D."/>
            <person name="Peter-Katalinic J."/>
            <person name="Hofsteenge J."/>
        </authorList>
    </citation>
    <scope>GLYCOSYLATION AT THR-92; THR-151; SER-208 AND THR-272</scope>
</reference>
<reference key="11">
    <citation type="journal article" date="2005" name="J. Proteome Res.">
        <title>Human plasma N-glycoproteome analysis by immunoaffinity subtraction, hydrazide chemistry, and mass spectrometry.</title>
        <authorList>
            <person name="Liu T."/>
            <person name="Qian W.-J."/>
            <person name="Gritsenko M.A."/>
            <person name="Camp D.G. II"/>
            <person name="Monroe M.E."/>
            <person name="Moore R.J."/>
            <person name="Smith R.D."/>
        </authorList>
    </citation>
    <scope>GLYCOSYLATION [LARGE SCALE ANALYSIS] AT ASN-428</scope>
    <source>
        <tissue>Plasma</tissue>
    </source>
</reference>
<reference key="12">
    <citation type="journal article" date="2006" name="J. Biol. Chem.">
        <title>The role of properdin in the assembly of the alternative pathway C3 convertases of complement.</title>
        <authorList>
            <person name="Hourcade D.E."/>
        </authorList>
    </citation>
    <scope>FUNCTION</scope>
    <scope>INTERACTION WITH COMPLEMENT C3B</scope>
</reference>
<reference key="13">
    <citation type="journal article" date="2009" name="Mol. Cell. Proteomics">
        <title>A strategy for precise and large scale identification of core fucosylated glycoproteins.</title>
        <authorList>
            <person name="Jia W."/>
            <person name="Lu Z."/>
            <person name="Fu Y."/>
            <person name="Wang H.P."/>
            <person name="Wang L.H."/>
            <person name="Chi H."/>
            <person name="Yuan Z.F."/>
            <person name="Zheng Z.B."/>
            <person name="Song L.N."/>
            <person name="Han H.H."/>
            <person name="Liang Y.M."/>
            <person name="Wang J.L."/>
            <person name="Cai Y."/>
            <person name="Zhang Y.K."/>
            <person name="Deng Y.L."/>
            <person name="Ying W.T."/>
            <person name="He S.M."/>
            <person name="Qian X.H."/>
        </authorList>
    </citation>
    <scope>GLYCOSYLATION AT ASN-428</scope>
</reference>
<reference key="14">
    <citation type="journal article" date="2010" name="Immunobiology">
        <title>Native polymeric forms of properdin selectively bind to targets and promote activation of the alternative pathway of complement.</title>
        <authorList>
            <person name="Ferreira V.P."/>
            <person name="Cortes C."/>
            <person name="Pangburn M.K."/>
        </authorList>
    </citation>
    <scope>FUNCTION</scope>
    <scope>SUBUNIT</scope>
</reference>
<reference key="15">
    <citation type="journal article" date="2004" name="J. Mol. Biol.">
        <title>The dimeric and trimeric solution structures of the multidomain complement protein properdin by X-ray scattering, analytical ultracentrifugation and constrained modelling.</title>
        <authorList>
            <person name="Sun Z."/>
            <person name="Reid K.B."/>
            <person name="Perkins S.J."/>
        </authorList>
    </citation>
    <scope>X-RAY SCATTERING SOLUTION STRUCTURE OF 28-469 IN DIMERIC AND TRIMERIC FORMS</scope>
    <scope>TSP DOMAINS</scope>
    <scope>SUBUNIT</scope>
</reference>
<reference evidence="21" key="16">
    <citation type="journal article" date="2017" name="EMBO J.">
        <title>Functional and structural insight into properdin control of complement alternative pathway amplification.</title>
        <authorList>
            <person name="Pedersen D.V."/>
            <person name="Roumenina L."/>
            <person name="Jensen R.K."/>
            <person name="Gadeberg T.A."/>
            <person name="Marinozzi C."/>
            <person name="Picard C."/>
            <person name="Rybkine T."/>
            <person name="Thiel S."/>
            <person name="Soerensen U.B."/>
            <person name="Stover C."/>
            <person name="Fremeaux-Bacchi V."/>
            <person name="Andersen G.R."/>
        </authorList>
    </citation>
    <scope>X-RAY CRYSTALLOGRAPHY (6.0 ANGSTROMS) OF 28-191 AND 256-469 IN COMPLEX WITH COMPLEMENT C3 BETA CHAIN; COMPLEMENT FACTOR B BB FRAGMENT AND STAPHYLOCOCCUS AUREUS PROTEIN SCN</scope>
    <scope>FUNCTION</scope>
    <scope>INTERACTION WITH COMPLEMENT C3 BETA CHAIN</scope>
    <scope>SUBUNIT</scope>
    <scope>SUBCELLULAR LOCATION</scope>
    <scope>DOMAIN</scope>
    <scope>VARIANT PFD LYS-244</scope>
    <scope>CHARACTERIZATION OF VARIANT PFD LYS-244</scope>
</reference>
<reference evidence="22" key="17">
    <citation type="journal article" date="2019" name="Front. Immunol.">
        <title>Structural Basis for Properdin Oligomerization and Convertase Stimulation in the Human Complement System.</title>
        <authorList>
            <person name="Pedersen D.V."/>
            <person name="Gadeberg T.A.F."/>
            <person name="Thomas C."/>
            <person name="Wang Y."/>
            <person name="Joram N."/>
            <person name="Jensen R.K."/>
            <person name="Mazarakis S.M.M."/>
            <person name="Revel M."/>
            <person name="El Sissy C."/>
            <person name="Petersen S.V."/>
            <person name="Lindorff-Larsen K."/>
            <person name="Thiel S."/>
            <person name="Laursen N.S."/>
            <person name="Fremeaux-Bacchi V."/>
            <person name="Andersen G.R."/>
        </authorList>
    </citation>
    <scope>X-RAY CRYSTALLOGRAPHY (2.8 ANGSTROMS) OF 28-191 AND 256-469 IN COMPLEX WITH COMPLEMENT C3 BETA CHAIN; COMPLEMENT FACTOR B BB FRAGMENT AND STAPHYLOCOCCUS AUREUS PROTEIN SCN</scope>
    <scope>IDENTIFICATION BY MASS SPECTROMETRY</scope>
    <scope>FUNCTION</scope>
    <scope>SUBUNIT</scope>
    <scope>INTERACTION WITH COMPLEMENT C3 BETA CHAIN AND COMPLEMENT FACTOR B BB FRAGMENT</scope>
    <scope>SUBCELLULAR LOCATION</scope>
    <scope>DOMAIN</scope>
    <scope>GLYCOSYLATION AT TRP-83; TRP-86; THR-92; TRP-139; TRP-142; TRP-145; THR-151; TRP-196; TRP-199; TRP-202; SER-208; TRP-260; TRP-263; THR-272; TRP-321; TRP-324; TRP-382; TRP-385 AND TRP-388</scope>
    <scope>DISULFIDE BOND</scope>
    <scope>VARIANT PFD TYR-32</scope>
    <scope>CHARACTERIZATION OF VARIANTS PFD TYR-32; ARG-343 AND ASP-414</scope>
    <scope>MUTAGENESIS OF LEU-47; LEU-58; GLU-244; LEU-275; ARG-329; ARG-330; ARG-351; ARG-353; ARG-359; 364-GLN-GLN-365 AND LEU-456</scope>
</reference>
<reference key="18">
    <citation type="journal article" date="1996" name="J. Immunol.">
        <title>Molecular characterization of properdin deficiency type III: dysfunction produced by a single point mutation in exon 9 of the structural gene causing a tyrosine to aspartic acid interchange.</title>
        <authorList>
            <person name="Fredrikson G.N."/>
            <person name="Westberg J."/>
            <person name="Kuijper E.J."/>
            <person name="Tijssen C.C."/>
            <person name="Sjoeholm A.G."/>
            <person name="Uhlen M."/>
            <person name="Truedsson L."/>
        </authorList>
    </citation>
    <scope>VARIANT PFD ASP-414</scope>
</reference>
<reference key="19">
    <citation type="journal article" date="1998" name="J. Clin. Immunol.">
        <title>Expression of properdin in complete and incomplete deficiency: normal in vitro synthesis by monocytes in two cases with properdin deficiency type II due to distinct mutations.</title>
        <authorList>
            <person name="Fredrikson G.N."/>
            <person name="Gullstrand B."/>
            <person name="Westberg J."/>
            <person name="Sjoeholm A.G."/>
            <person name="Uhlen M."/>
            <person name="Truedsson L."/>
        </authorList>
    </citation>
    <scope>VARIANT PFD ARG-343</scope>
</reference>
<reference key="20">
    <citation type="journal article" date="2000" name="Eur. J. Hum. Genet.">
        <title>Molecular characterisation of 10 Dutch properdin type I deficient families: mutation analysis and X-inactivation studies.</title>
        <authorList>
            <person name="van den Bogaard R."/>
            <person name="Fijen C.A.P."/>
            <person name="Schipper M.G.J."/>
            <person name="de Galan L."/>
            <person name="Kuijper E.J."/>
            <person name="Mannens M.M.A.M."/>
        </authorList>
    </citation>
    <scope>VARIANT PFD VAL-298</scope>
</reference>
<reference key="21">
    <citation type="journal article" date="2006" name="Science">
        <title>The consensus coding sequences of human breast and colorectal cancers.</title>
        <authorList>
            <person name="Sjoeblom T."/>
            <person name="Jones S."/>
            <person name="Wood L.D."/>
            <person name="Parsons D.W."/>
            <person name="Lin J."/>
            <person name="Barber T.D."/>
            <person name="Mandelker D."/>
            <person name="Leary R.J."/>
            <person name="Ptak J."/>
            <person name="Silliman N."/>
            <person name="Szabo S."/>
            <person name="Buckhaults P."/>
            <person name="Farrell C."/>
            <person name="Meeh P."/>
            <person name="Markowitz S.D."/>
            <person name="Willis J."/>
            <person name="Dawson D."/>
            <person name="Willson J.K.V."/>
            <person name="Gazdar A.F."/>
            <person name="Hartigan J."/>
            <person name="Wu L."/>
            <person name="Liu C."/>
            <person name="Parmigiani G."/>
            <person name="Park B.H."/>
            <person name="Bachman K.E."/>
            <person name="Papadopoulos N."/>
            <person name="Vogelstein B."/>
            <person name="Kinzler K.W."/>
            <person name="Velculescu V.E."/>
        </authorList>
    </citation>
    <scope>VARIANT [LARGE SCALE ANALYSIS] ILE-3</scope>
</reference>
<proteinExistence type="evidence at protein level"/>
<keyword id="KW-0002">3D-structure</keyword>
<keyword id="KW-0179">Complement alternate pathway</keyword>
<keyword id="KW-0225">Disease variant</keyword>
<keyword id="KW-1015">Disulfide bond</keyword>
<keyword id="KW-0325">Glycoprotein</keyword>
<keyword id="KW-0391">Immunity</keyword>
<keyword id="KW-0399">Innate immunity</keyword>
<keyword id="KW-1267">Proteomics identification</keyword>
<keyword id="KW-1185">Reference proteome</keyword>
<keyword id="KW-0677">Repeat</keyword>
<keyword id="KW-0964">Secreted</keyword>
<keyword id="KW-0732">Signal</keyword>
<name>PROP_HUMAN</name>
<gene>
    <name evidence="20" type="primary">CFP</name>
    <name type="synonym">PFC</name>
</gene>